<reference evidence="6" key="1">
    <citation type="journal article" date="1998" name="Science">
        <title>Genome sequence of the nematode C. elegans: a platform for investigating biology.</title>
        <authorList>
            <consortium name="The C. elegans sequencing consortium"/>
        </authorList>
    </citation>
    <scope>NUCLEOTIDE SEQUENCE [LARGE SCALE GENOMIC DNA]</scope>
    <source>
        <strain evidence="6">Bristol N2</strain>
    </source>
</reference>
<reference evidence="5" key="2">
    <citation type="journal article" date="2005" name="Genetics">
        <title>Systematic, RNA-interference-mediated identification of mus-101 modifier genes in Caenorhabditis elegans.</title>
        <authorList>
            <person name="Holway A.H."/>
            <person name="Hung C."/>
            <person name="Michael W.M."/>
        </authorList>
    </citation>
    <scope>FUNCTION</scope>
    <scope>DISRUPTION PHENOTYPE</scope>
</reference>
<reference evidence="5" key="3">
    <citation type="journal article" date="2019" name="PLoS Genet.">
        <title>HRPK-1, a conserved KH-domain protein, modulates microRNA activity during Caenorhabditis elegans development.</title>
        <authorList>
            <person name="Li L."/>
            <person name="Veksler-Lublinsky I."/>
            <person name="Zinovyeva A."/>
        </authorList>
    </citation>
    <scope>FUNCTION</scope>
    <scope>INTERACTION WITH ALG-1</scope>
    <scope>SUBCELLULAR LOCATION</scope>
    <scope>TISSUE SPECIFICITY</scope>
    <scope>DEVELOPMENTAL STAGE</scope>
    <scope>DISRUPTION PHENOTYPE</scope>
</reference>
<dbReference type="EMBL" id="BX284601">
    <property type="protein sequence ID" value="CCD64191.1"/>
    <property type="molecule type" value="Genomic_DNA"/>
</dbReference>
<dbReference type="EMBL" id="BX284601">
    <property type="protein sequence ID" value="CCD64192.1"/>
    <property type="molecule type" value="Genomic_DNA"/>
</dbReference>
<dbReference type="EMBL" id="BX284601">
    <property type="protein sequence ID" value="CCD64193.1"/>
    <property type="molecule type" value="Genomic_DNA"/>
</dbReference>
<dbReference type="EMBL" id="BX284601">
    <property type="protein sequence ID" value="CCD64194.1"/>
    <property type="molecule type" value="Genomic_DNA"/>
</dbReference>
<dbReference type="EMBL" id="BX284601">
    <property type="protein sequence ID" value="CCD64195.1"/>
    <property type="molecule type" value="Genomic_DNA"/>
</dbReference>
<dbReference type="PIR" id="T30168">
    <property type="entry name" value="T30168"/>
</dbReference>
<dbReference type="RefSeq" id="NP_001379657.1">
    <molecule id="P91277-2"/>
    <property type="nucleotide sequence ID" value="NM_001392432.1"/>
</dbReference>
<dbReference type="RefSeq" id="NP_001379658.1">
    <molecule id="P91277-3"/>
    <property type="nucleotide sequence ID" value="NM_001392431.1"/>
</dbReference>
<dbReference type="RefSeq" id="NP_001379659.1">
    <molecule id="P91277-4"/>
    <property type="nucleotide sequence ID" value="NM_001392433.1"/>
</dbReference>
<dbReference type="RefSeq" id="NP_001379660.1">
    <molecule id="P91277-5"/>
    <property type="nucleotide sequence ID" value="NM_001392429.1"/>
</dbReference>
<dbReference type="RefSeq" id="NP_491825.2">
    <property type="nucleotide sequence ID" value="NM_059424.5"/>
</dbReference>
<dbReference type="RefSeq" id="NP_740869.1">
    <molecule id="P91277-1"/>
    <property type="nucleotide sequence ID" value="NM_170880.6"/>
</dbReference>
<dbReference type="RefSeq" id="NP_740870.2">
    <property type="nucleotide sequence ID" value="NM_170881.4"/>
</dbReference>
<dbReference type="RefSeq" id="NP_871833.1">
    <property type="nucleotide sequence ID" value="NM_182033.3"/>
</dbReference>
<dbReference type="RefSeq" id="NP_871834.1">
    <property type="nucleotide sequence ID" value="NM_182034.3"/>
</dbReference>
<dbReference type="SMR" id="P91277"/>
<dbReference type="DIP" id="DIP-27318N"/>
<dbReference type="FunCoup" id="P91277">
    <property type="interactions" value="3501"/>
</dbReference>
<dbReference type="IntAct" id="P91277">
    <property type="interactions" value="9"/>
</dbReference>
<dbReference type="STRING" id="6239.F26B1.2a.1"/>
<dbReference type="PaxDb" id="6239-F26B1.2a"/>
<dbReference type="PeptideAtlas" id="P91277"/>
<dbReference type="EnsemblMetazoa" id="F26B1.2a.1">
    <molecule id="P91277-1"/>
    <property type="protein sequence ID" value="F26B1.2a.1"/>
    <property type="gene ID" value="WBGene00017816"/>
</dbReference>
<dbReference type="EnsemblMetazoa" id="F26B1.2b.1">
    <molecule id="P91277-2"/>
    <property type="protein sequence ID" value="F26B1.2b.1"/>
    <property type="gene ID" value="WBGene00017816"/>
</dbReference>
<dbReference type="EnsemblMetazoa" id="F26B1.2b.2">
    <molecule id="P91277-2"/>
    <property type="protein sequence ID" value="F26B1.2b.2"/>
    <property type="gene ID" value="WBGene00017816"/>
</dbReference>
<dbReference type="EnsemblMetazoa" id="F26B1.2b.3">
    <molecule id="P91277-2"/>
    <property type="protein sequence ID" value="F26B1.2b.3"/>
    <property type="gene ID" value="WBGene00017816"/>
</dbReference>
<dbReference type="EnsemblMetazoa" id="F26B1.2b.4">
    <molecule id="P91277-2"/>
    <property type="protein sequence ID" value="F26B1.2b.4"/>
    <property type="gene ID" value="WBGene00017816"/>
</dbReference>
<dbReference type="EnsemblMetazoa" id="F26B1.2c.1">
    <molecule id="P91277-3"/>
    <property type="protein sequence ID" value="F26B1.2c.1"/>
    <property type="gene ID" value="WBGene00017816"/>
</dbReference>
<dbReference type="EnsemblMetazoa" id="F26B1.2d.1">
    <molecule id="P91277-4"/>
    <property type="protein sequence ID" value="F26B1.2d.1"/>
    <property type="gene ID" value="WBGene00017816"/>
</dbReference>
<dbReference type="EnsemblMetazoa" id="F26B1.2d.2">
    <molecule id="P91277-4"/>
    <property type="protein sequence ID" value="F26B1.2d.2"/>
    <property type="gene ID" value="WBGene00017816"/>
</dbReference>
<dbReference type="EnsemblMetazoa" id="F26B1.2e.1">
    <molecule id="P91277-5"/>
    <property type="protein sequence ID" value="F26B1.2e.1"/>
    <property type="gene ID" value="WBGene00017816"/>
</dbReference>
<dbReference type="GeneID" id="172330"/>
<dbReference type="KEGG" id="cel:CELE_F26B1.2"/>
<dbReference type="UCSC" id="F26B1.2c.3">
    <property type="organism name" value="c. elegans"/>
</dbReference>
<dbReference type="AGR" id="WB:WBGene00017816"/>
<dbReference type="CTD" id="172330"/>
<dbReference type="WormBase" id="F26B1.2a">
    <molecule id="P91277-1"/>
    <property type="protein sequence ID" value="CE09674"/>
    <property type="gene ID" value="WBGene00017816"/>
    <property type="gene designation" value="hrpk-1"/>
</dbReference>
<dbReference type="WormBase" id="F26B1.2b">
    <molecule id="P91277-2"/>
    <property type="protein sequence ID" value="CE33057"/>
    <property type="gene ID" value="WBGene00017816"/>
    <property type="gene designation" value="hrpk-1"/>
</dbReference>
<dbReference type="WormBase" id="F26B1.2c">
    <molecule id="P91277-3"/>
    <property type="protein sequence ID" value="CE33058"/>
    <property type="gene ID" value="WBGene00017816"/>
    <property type="gene designation" value="hrpk-1"/>
</dbReference>
<dbReference type="WormBase" id="F26B1.2d">
    <molecule id="P91277-4"/>
    <property type="protein sequence ID" value="CE33059"/>
    <property type="gene ID" value="WBGene00017816"/>
    <property type="gene designation" value="hrpk-1"/>
</dbReference>
<dbReference type="WormBase" id="F26B1.2e">
    <molecule id="P91277-5"/>
    <property type="protein sequence ID" value="CE33060"/>
    <property type="gene ID" value="WBGene00017816"/>
    <property type="gene designation" value="hrpk-1"/>
</dbReference>
<dbReference type="eggNOG" id="KOG2192">
    <property type="taxonomic scope" value="Eukaryota"/>
</dbReference>
<dbReference type="GeneTree" id="ENSGT00940000153434"/>
<dbReference type="HOGENOM" id="CLU_2401624_0_0_1"/>
<dbReference type="InParanoid" id="P91277"/>
<dbReference type="OMA" id="KGTEQQI"/>
<dbReference type="OrthoDB" id="1937934at2759"/>
<dbReference type="PhylomeDB" id="P91277"/>
<dbReference type="Reactome" id="R-CEL-72163">
    <property type="pathway name" value="mRNA Splicing - Major Pathway"/>
</dbReference>
<dbReference type="Reactome" id="R-CEL-72203">
    <property type="pathway name" value="Processing of Capped Intron-Containing Pre-mRNA"/>
</dbReference>
<dbReference type="PRO" id="PR:P91277"/>
<dbReference type="Proteomes" id="UP000001940">
    <property type="component" value="Chromosome I"/>
</dbReference>
<dbReference type="Bgee" id="WBGene00017816">
    <property type="expression patterns" value="Expressed in pharyngeal muscle cell (C elegans) and 4 other cell types or tissues"/>
</dbReference>
<dbReference type="GO" id="GO:0005737">
    <property type="term" value="C:cytoplasm"/>
    <property type="evidence" value="ECO:0000318"/>
    <property type="project" value="GO_Central"/>
</dbReference>
<dbReference type="GO" id="GO:0005634">
    <property type="term" value="C:nucleus"/>
    <property type="evidence" value="ECO:0000318"/>
    <property type="project" value="GO_Central"/>
</dbReference>
<dbReference type="GO" id="GO:0003729">
    <property type="term" value="F:mRNA binding"/>
    <property type="evidence" value="ECO:0000318"/>
    <property type="project" value="GO_Central"/>
</dbReference>
<dbReference type="GO" id="GO:0006974">
    <property type="term" value="P:DNA damage response"/>
    <property type="evidence" value="ECO:0000315"/>
    <property type="project" value="WormBase"/>
</dbReference>
<dbReference type="GO" id="GO:0009792">
    <property type="term" value="P:embryo development ending in birth or egg hatching"/>
    <property type="evidence" value="ECO:0000316"/>
    <property type="project" value="WormBase"/>
</dbReference>
<dbReference type="GO" id="GO:0048024">
    <property type="term" value="P:regulation of mRNA splicing, via spliceosome"/>
    <property type="evidence" value="ECO:0000318"/>
    <property type="project" value="GO_Central"/>
</dbReference>
<dbReference type="GO" id="GO:0006357">
    <property type="term" value="P:regulation of transcription by RNA polymerase II"/>
    <property type="evidence" value="ECO:0000318"/>
    <property type="project" value="GO_Central"/>
</dbReference>
<dbReference type="GO" id="GO:0031047">
    <property type="term" value="P:regulatory ncRNA-mediated gene silencing"/>
    <property type="evidence" value="ECO:0007669"/>
    <property type="project" value="UniProtKB-KW"/>
</dbReference>
<dbReference type="CDD" id="cd22432">
    <property type="entry name" value="KH-I_HNRNPK_rpt1"/>
    <property type="match status" value="1"/>
</dbReference>
<dbReference type="CDD" id="cd22433">
    <property type="entry name" value="KH-I_HNRNPK_rpt2"/>
    <property type="match status" value="1"/>
</dbReference>
<dbReference type="CDD" id="cd22434">
    <property type="entry name" value="KH-I_HNRNPK_rpt3"/>
    <property type="match status" value="1"/>
</dbReference>
<dbReference type="Gene3D" id="3.30.1370.10">
    <property type="entry name" value="K Homology domain, type 1"/>
    <property type="match status" value="3"/>
</dbReference>
<dbReference type="InterPro" id="IPR004087">
    <property type="entry name" value="KH_dom"/>
</dbReference>
<dbReference type="InterPro" id="IPR004088">
    <property type="entry name" value="KH_dom_type_1"/>
</dbReference>
<dbReference type="InterPro" id="IPR036612">
    <property type="entry name" value="KH_dom_type_1_sf"/>
</dbReference>
<dbReference type="PANTHER" id="PTHR10288">
    <property type="entry name" value="KH DOMAIN CONTAINING RNA BINDING PROTEIN"/>
    <property type="match status" value="1"/>
</dbReference>
<dbReference type="Pfam" id="PF00013">
    <property type="entry name" value="KH_1"/>
    <property type="match status" value="3"/>
</dbReference>
<dbReference type="SMART" id="SM00322">
    <property type="entry name" value="KH"/>
    <property type="match status" value="3"/>
</dbReference>
<dbReference type="SUPFAM" id="SSF54791">
    <property type="entry name" value="Eukaryotic type KH-domain (KH-domain type I)"/>
    <property type="match status" value="3"/>
</dbReference>
<dbReference type="PROSITE" id="PS50084">
    <property type="entry name" value="KH_TYPE_1"/>
    <property type="match status" value="3"/>
</dbReference>
<accession>P91277</accession>
<accession>Q8I7G7</accession>
<accession>Q8I7G8</accession>
<accession>Q8I7G9</accession>
<accession>Q8T3B5</accession>
<sequence>MMIKVGAAINGTDSPKAMKREHDNDDGDRTGRHKRPKTDGFTEAIQQGKFEVRLLVSSKSAGAIIGKGGENIKRLRAEFNAHVQVPDSNTPERVCTVTADEKTVLNILKDVLPRLEDNFSERDPCEVRMLVHQSHAGALIGRNGSKIKELREKCSARLKIFTGCAPGSTDRVLITSGEQKNVLGIIEEVMKELKEIPIKGSATPYLPAFNYDPSNISDYGGFPGNMPAGGPPNNRGPAPQRGGQGPPGGPRSYGGAITQGGGQRSFEAGDFQQFRGGPGPVPGYAMSAPGYPPQQGQFGAPNNAGYGYGPGGGGPVTTAQVTIPSDLGGTIIGRGGERIARIRQESGAQITLEQSNGQPERIITIKGTEQQIHSAQYLLQQCVRNSTQGRERFGGSV</sequence>
<proteinExistence type="evidence at protein level"/>
<gene>
    <name evidence="7" type="primary">hrpk-1</name>
    <name evidence="7" type="ORF">F26B1.2</name>
</gene>
<keyword id="KW-0025">Alternative splicing</keyword>
<keyword id="KW-0963">Cytoplasm</keyword>
<keyword id="KW-0539">Nucleus</keyword>
<keyword id="KW-1185">Reference proteome</keyword>
<keyword id="KW-0677">Repeat</keyword>
<keyword id="KW-0694">RNA-binding</keyword>
<keyword id="KW-0943">RNA-mediated gene silencing</keyword>
<protein>
    <recommendedName>
        <fullName evidence="7">Heterogeneous nuclear ribonucleoprotein K homolog</fullName>
        <shortName evidence="5">hnRNP K</shortName>
    </recommendedName>
</protein>
<organism evidence="6">
    <name type="scientific">Caenorhabditis elegans</name>
    <dbReference type="NCBI Taxonomy" id="6239"/>
    <lineage>
        <taxon>Eukaryota</taxon>
        <taxon>Metazoa</taxon>
        <taxon>Ecdysozoa</taxon>
        <taxon>Nematoda</taxon>
        <taxon>Chromadorea</taxon>
        <taxon>Rhabditida</taxon>
        <taxon>Rhabditina</taxon>
        <taxon>Rhabditomorpha</taxon>
        <taxon>Rhabditoidea</taxon>
        <taxon>Rhabditidae</taxon>
        <taxon>Peloderinae</taxon>
        <taxon>Caenorhabditis</taxon>
    </lineage>
</organism>
<comment type="function">
    <text evidence="3 4">RNA-binding protein which functions together with alg-1, a component of the miRNA loading complex, to modulate the processing and activity of specific miRNAs such as miR-58 and let-7 to regulate gene expression at the post-transcriptional level during embryonic, hypodermal and neuronal development (PubMed:31584932). Promotes the lsy-6-mediated repression of cog-1 in uterine cells (PubMed:31584932). In embryos, may play a role in the DNA damage response (PubMed:15654100).</text>
</comment>
<comment type="subunit">
    <text evidence="4">Interacts with alg-1; the interaction is direct and may be strengthened through RNA-protein association.</text>
</comment>
<comment type="interaction">
    <interactant intactId="EBI-320476">
        <id>P91277</id>
    </interactant>
    <interactant intactId="EBI-320508">
        <id>Q9GRY9</id>
        <label>nova-1</label>
    </interactant>
    <organismsDiffer>false</organismsDiffer>
    <experiments>3</experiments>
</comment>
<comment type="interaction">
    <interactant intactId="EBI-320476">
        <id>P91277</id>
    </interactant>
    <interactant intactId="EBI-311961">
        <id>Q9XVS2</id>
        <label>sup-46</label>
    </interactant>
    <organismsDiffer>false</organismsDiffer>
    <experiments>3</experiments>
</comment>
<comment type="subcellular location">
    <subcellularLocation>
        <location evidence="4">Nucleus</location>
    </subcellularLocation>
    <subcellularLocation>
        <location evidence="4">Cytoplasm</location>
    </subcellularLocation>
    <text evidence="4">Localizes to the cytoplasm and nucleus in the germline, oocytes and early embryos (PubMed:31584932). Does not localize to the cytoplasm of somatic cells (PubMed:31584932).</text>
</comment>
<comment type="alternative products">
    <event type="alternative splicing"/>
    <isoform>
        <id>P91277-1</id>
        <name evidence="7">a</name>
        <sequence type="displayed"/>
    </isoform>
    <isoform>
        <id>P91277-2</id>
        <name evidence="8">b</name>
        <sequence type="described" ref="VSP_060454 VSP_060456 VSP_060457"/>
    </isoform>
    <isoform>
        <id>P91277-3</id>
        <name evidence="9">c</name>
        <sequence type="described" ref="VSP_060454"/>
    </isoform>
    <isoform>
        <id>P91277-4</id>
        <name evidence="10">d</name>
        <sequence type="described" ref="VSP_060454 VSP_060455 VSP_060458"/>
    </isoform>
    <isoform>
        <id>P91277-5</id>
        <name evidence="11">e</name>
        <sequence type="described" ref="VSP_060459"/>
    </isoform>
</comment>
<comment type="tissue specificity">
    <text evidence="4">Expressed in gut, muscle, neuronal and hypodermal tissues (PubMed:31584932). Highly expressed in the germline and oocytes (PubMed:31584932).</text>
</comment>
<comment type="developmental stage">
    <text evidence="4">Ubiquitously expressed throughout development (PubMed:31584932). Highly expressed in early embryos (PubMed:31584932).</text>
</comment>
<comment type="disruption phenotype">
    <text evidence="3 4">Temperature sensitive with 35% embryonic lethality at 20 degrees Celsius and 80% at 25 degrees Celsius (PubMed:31584932). Of the surviving offspring, 30% are sterile at 20 degrees Celsius and 76% are sterile at 25 degrees Celsius (PubMed:31584932). The majority of non-sterile animals have a reduced brood size (PubMed:31584932). In addition, animals have gonadal formation defects and display a bursting vulva phenotype (PubMed:31584932). Reduced number of miRNAs including miR-58 in embryos and L4 larvae (PubMed:31584932). Defective neuronal cell fate switching, whereby fewer ASEL neurons adopt an ASER cell fate in an lsy-6 mutant background (PubMed:31584932). In young adults, increased number of seam cells and enhanced hypodermal development defects in the double miR-48 and miR-241 mutant (PubMed:31584932). The majority of mutants are embryonic lethal in a miR-35-42 mutant background (PubMed:31584932). Enhanced defects in hypodermal development and alae formation in a let-7 mutant background (PubMed:31584932). RNAi-mediated knockdown relieves the lys-6-mediated repression of cog-1 in uterine cells (PubMed:31584932). RNAi-mediated knockdown results in increased sensitivity to the DNA-damage agent methyl methanesulfonate in embryos, but does not disrupt the morphology of the nucleus (PubMed:15654100). RNAi-mediated knockdown enhances the bursting vulva phenotype in a let-7 mutant background (PubMed:31584932).</text>
</comment>
<feature type="chain" id="PRO_0000448779" description="Heterogeneous nuclear ribonucleoprotein K homolog">
    <location>
        <begin position="1"/>
        <end position="397"/>
    </location>
</feature>
<feature type="domain" description="KH 1" evidence="1">
    <location>
        <begin position="49"/>
        <end position="111"/>
    </location>
</feature>
<feature type="domain" description="KH 2" evidence="1">
    <location>
        <begin position="124"/>
        <end position="189"/>
    </location>
</feature>
<feature type="domain" description="KH 3" evidence="1">
    <location>
        <begin position="316"/>
        <end position="379"/>
    </location>
</feature>
<feature type="region of interest" description="Disordered" evidence="2">
    <location>
        <begin position="1"/>
        <end position="41"/>
    </location>
</feature>
<feature type="region of interest" description="Disordered" evidence="2">
    <location>
        <begin position="220"/>
        <end position="279"/>
    </location>
</feature>
<feature type="compositionally biased region" description="Basic and acidic residues" evidence="2">
    <location>
        <begin position="16"/>
        <end position="30"/>
    </location>
</feature>
<feature type="compositionally biased region" description="Low complexity" evidence="2">
    <location>
        <begin position="224"/>
        <end position="241"/>
    </location>
</feature>
<feature type="splice variant" id="VSP_060454" description="In isoform b, isoform c and isoform d." evidence="5">
    <location>
        <begin position="1"/>
        <end position="17"/>
    </location>
</feature>
<feature type="splice variant" id="VSP_060455" description="In isoform d." evidence="5">
    <original>FNAHVQVPDS</original>
    <variation>VSFTGILLCF</variation>
    <location>
        <begin position="79"/>
        <end position="88"/>
    </location>
</feature>
<feature type="splice variant" id="VSP_060456" description="In isoform b." evidence="5">
    <original>FNAHVQ</original>
    <variation>RLHRYC</variation>
    <location>
        <begin position="79"/>
        <end position="84"/>
    </location>
</feature>
<feature type="splice variant" id="VSP_060457" description="In isoform b." evidence="5">
    <location>
        <begin position="85"/>
        <end position="397"/>
    </location>
</feature>
<feature type="splice variant" id="VSP_060458" description="In isoform d." evidence="5">
    <location>
        <begin position="89"/>
        <end position="397"/>
    </location>
</feature>
<feature type="splice variant" id="VSP_060459" description="In isoform e." evidence="5">
    <location>
        <begin position="94"/>
        <end position="397"/>
    </location>
</feature>
<evidence type="ECO:0000255" key="1">
    <source>
        <dbReference type="PROSITE-ProRule" id="PRU00117"/>
    </source>
</evidence>
<evidence type="ECO:0000256" key="2">
    <source>
        <dbReference type="SAM" id="MobiDB-lite"/>
    </source>
</evidence>
<evidence type="ECO:0000269" key="3">
    <source>
    </source>
</evidence>
<evidence type="ECO:0000269" key="4">
    <source>
    </source>
</evidence>
<evidence type="ECO:0000305" key="5"/>
<evidence type="ECO:0000312" key="6">
    <source>
        <dbReference type="Proteomes" id="UP000001940"/>
    </source>
</evidence>
<evidence type="ECO:0000312" key="7">
    <source>
        <dbReference type="WormBase" id="F26B1.2a"/>
    </source>
</evidence>
<evidence type="ECO:0000312" key="8">
    <source>
        <dbReference type="WormBase" id="F26B1.2b"/>
    </source>
</evidence>
<evidence type="ECO:0000312" key="9">
    <source>
        <dbReference type="WormBase" id="F26B1.2c"/>
    </source>
</evidence>
<evidence type="ECO:0000312" key="10">
    <source>
        <dbReference type="WormBase" id="F26B1.2d"/>
    </source>
</evidence>
<evidence type="ECO:0000312" key="11">
    <source>
        <dbReference type="WormBase" id="F26B1.2e"/>
    </source>
</evidence>
<name>HRPK1_CAEEL</name>